<keyword id="KW-0029">Amino-acid transport</keyword>
<keyword id="KW-0067">ATP-binding</keyword>
<keyword id="KW-1003">Cell membrane</keyword>
<keyword id="KW-0472">Membrane</keyword>
<keyword id="KW-0547">Nucleotide-binding</keyword>
<keyword id="KW-1278">Translocase</keyword>
<keyword id="KW-0813">Transport</keyword>
<sequence length="340" mass="38083">MITLQNVVKEYTSRNNKVLAVDHVDLEIEQGEIFGVVGYSGAGKSTLIRMFNGLELPSAGTVEVDNLLISQIRGSKLRKARQQIGMIFQHFNLLWSRTVAENIAFPLEIAGVRGEKRRFRVNELIRLVGLEGKENAYPSELSGGQKQRVGIARALANNPKVLLCDEATSALDPQTTDEVLELLLDINKRLHLTIIVITHEMHVIRKICNRVAVMENGKVVELGDVLDVFRHPQEKVTQRFVRQVTDSDETEELIHLLLDNYAEGKIVKLLFMSENATQPVISQVAKENDVMLNVLHGNLTQTQNGAYGTLYVQVLGTEDAINASLTQLRQLKVETEVLER</sequence>
<dbReference type="EC" id="7.4.2.11" evidence="1"/>
<dbReference type="EMBL" id="AE017262">
    <property type="protein sequence ID" value="AAT05156.1"/>
    <property type="molecule type" value="Genomic_DNA"/>
</dbReference>
<dbReference type="RefSeq" id="WP_003725604.1">
    <property type="nucleotide sequence ID" value="NC_002973.6"/>
</dbReference>
<dbReference type="SMR" id="Q71X09"/>
<dbReference type="KEGG" id="lmf:LMOf2365_2390"/>
<dbReference type="HOGENOM" id="CLU_000604_1_3_9"/>
<dbReference type="GO" id="GO:0005886">
    <property type="term" value="C:plasma membrane"/>
    <property type="evidence" value="ECO:0007669"/>
    <property type="project" value="UniProtKB-SubCell"/>
</dbReference>
<dbReference type="GO" id="GO:0033232">
    <property type="term" value="F:ABC-type D-methionine transporter activity"/>
    <property type="evidence" value="ECO:0007669"/>
    <property type="project" value="UniProtKB-EC"/>
</dbReference>
<dbReference type="GO" id="GO:0005524">
    <property type="term" value="F:ATP binding"/>
    <property type="evidence" value="ECO:0007669"/>
    <property type="project" value="UniProtKB-KW"/>
</dbReference>
<dbReference type="GO" id="GO:0016887">
    <property type="term" value="F:ATP hydrolysis activity"/>
    <property type="evidence" value="ECO:0007669"/>
    <property type="project" value="InterPro"/>
</dbReference>
<dbReference type="CDD" id="cd03258">
    <property type="entry name" value="ABC_MetN_methionine_transporter"/>
    <property type="match status" value="1"/>
</dbReference>
<dbReference type="FunFam" id="3.40.50.300:FF:000056">
    <property type="entry name" value="Cell division ATP-binding protein FtsE"/>
    <property type="match status" value="1"/>
</dbReference>
<dbReference type="Gene3D" id="3.30.70.260">
    <property type="match status" value="1"/>
</dbReference>
<dbReference type="Gene3D" id="3.40.50.300">
    <property type="entry name" value="P-loop containing nucleotide triphosphate hydrolases"/>
    <property type="match status" value="1"/>
</dbReference>
<dbReference type="InterPro" id="IPR003593">
    <property type="entry name" value="AAA+_ATPase"/>
</dbReference>
<dbReference type="InterPro" id="IPR003439">
    <property type="entry name" value="ABC_transporter-like_ATP-bd"/>
</dbReference>
<dbReference type="InterPro" id="IPR017871">
    <property type="entry name" value="ABC_transporter-like_CS"/>
</dbReference>
<dbReference type="InterPro" id="IPR045865">
    <property type="entry name" value="ACT-like_dom_sf"/>
</dbReference>
<dbReference type="InterPro" id="IPR041701">
    <property type="entry name" value="MetN_ABC"/>
</dbReference>
<dbReference type="InterPro" id="IPR050086">
    <property type="entry name" value="MetN_ABC_transporter-like"/>
</dbReference>
<dbReference type="InterPro" id="IPR018449">
    <property type="entry name" value="NIL_domain"/>
</dbReference>
<dbReference type="InterPro" id="IPR027417">
    <property type="entry name" value="P-loop_NTPase"/>
</dbReference>
<dbReference type="PANTHER" id="PTHR43166">
    <property type="entry name" value="AMINO ACID IMPORT ATP-BINDING PROTEIN"/>
    <property type="match status" value="1"/>
</dbReference>
<dbReference type="PANTHER" id="PTHR43166:SF36">
    <property type="entry name" value="METHIONINE IMPORT ATP-BINDING PROTEIN METN 2"/>
    <property type="match status" value="1"/>
</dbReference>
<dbReference type="Pfam" id="PF00005">
    <property type="entry name" value="ABC_tran"/>
    <property type="match status" value="1"/>
</dbReference>
<dbReference type="Pfam" id="PF09383">
    <property type="entry name" value="NIL"/>
    <property type="match status" value="1"/>
</dbReference>
<dbReference type="SMART" id="SM00382">
    <property type="entry name" value="AAA"/>
    <property type="match status" value="1"/>
</dbReference>
<dbReference type="SMART" id="SM00930">
    <property type="entry name" value="NIL"/>
    <property type="match status" value="1"/>
</dbReference>
<dbReference type="SUPFAM" id="SSF55021">
    <property type="entry name" value="ACT-like"/>
    <property type="match status" value="1"/>
</dbReference>
<dbReference type="SUPFAM" id="SSF52540">
    <property type="entry name" value="P-loop containing nucleoside triphosphate hydrolases"/>
    <property type="match status" value="1"/>
</dbReference>
<dbReference type="PROSITE" id="PS00211">
    <property type="entry name" value="ABC_TRANSPORTER_1"/>
    <property type="match status" value="1"/>
</dbReference>
<dbReference type="PROSITE" id="PS50893">
    <property type="entry name" value="ABC_TRANSPORTER_2"/>
    <property type="match status" value="1"/>
</dbReference>
<dbReference type="PROSITE" id="PS51264">
    <property type="entry name" value="METN"/>
    <property type="match status" value="1"/>
</dbReference>
<accession>Q71X09</accession>
<gene>
    <name evidence="1" type="primary">metN2</name>
    <name type="ordered locus">LMOf2365_2390</name>
</gene>
<name>METN2_LISMF</name>
<protein>
    <recommendedName>
        <fullName evidence="1">Methionine import ATP-binding protein MetN 2</fullName>
        <ecNumber evidence="1">7.4.2.11</ecNumber>
    </recommendedName>
</protein>
<evidence type="ECO:0000255" key="1">
    <source>
        <dbReference type="HAMAP-Rule" id="MF_01719"/>
    </source>
</evidence>
<organism>
    <name type="scientific">Listeria monocytogenes serotype 4b (strain F2365)</name>
    <dbReference type="NCBI Taxonomy" id="265669"/>
    <lineage>
        <taxon>Bacteria</taxon>
        <taxon>Bacillati</taxon>
        <taxon>Bacillota</taxon>
        <taxon>Bacilli</taxon>
        <taxon>Bacillales</taxon>
        <taxon>Listeriaceae</taxon>
        <taxon>Listeria</taxon>
    </lineage>
</organism>
<feature type="chain" id="PRO_0000270331" description="Methionine import ATP-binding protein MetN 2">
    <location>
        <begin position="1"/>
        <end position="340"/>
    </location>
</feature>
<feature type="domain" description="ABC transporter" evidence="1">
    <location>
        <begin position="2"/>
        <end position="241"/>
    </location>
</feature>
<feature type="binding site" evidence="1">
    <location>
        <begin position="38"/>
        <end position="45"/>
    </location>
    <ligand>
        <name>ATP</name>
        <dbReference type="ChEBI" id="CHEBI:30616"/>
    </ligand>
</feature>
<comment type="function">
    <text evidence="1">Part of the ABC transporter complex MetNIQ involved in methionine import. Responsible for energy coupling to the transport system.</text>
</comment>
<comment type="catalytic activity">
    <reaction evidence="1">
        <text>L-methionine(out) + ATP + H2O = L-methionine(in) + ADP + phosphate + H(+)</text>
        <dbReference type="Rhea" id="RHEA:29779"/>
        <dbReference type="ChEBI" id="CHEBI:15377"/>
        <dbReference type="ChEBI" id="CHEBI:15378"/>
        <dbReference type="ChEBI" id="CHEBI:30616"/>
        <dbReference type="ChEBI" id="CHEBI:43474"/>
        <dbReference type="ChEBI" id="CHEBI:57844"/>
        <dbReference type="ChEBI" id="CHEBI:456216"/>
        <dbReference type="EC" id="7.4.2.11"/>
    </reaction>
</comment>
<comment type="catalytic activity">
    <reaction evidence="1">
        <text>D-methionine(out) + ATP + H2O = D-methionine(in) + ADP + phosphate + H(+)</text>
        <dbReference type="Rhea" id="RHEA:29767"/>
        <dbReference type="ChEBI" id="CHEBI:15377"/>
        <dbReference type="ChEBI" id="CHEBI:15378"/>
        <dbReference type="ChEBI" id="CHEBI:30616"/>
        <dbReference type="ChEBI" id="CHEBI:43474"/>
        <dbReference type="ChEBI" id="CHEBI:57932"/>
        <dbReference type="ChEBI" id="CHEBI:456216"/>
        <dbReference type="EC" id="7.4.2.11"/>
    </reaction>
</comment>
<comment type="subunit">
    <text evidence="1">The complex is composed of two ATP-binding proteins (MetN), two transmembrane proteins (MetI) and a solute-binding protein (MetQ).</text>
</comment>
<comment type="subcellular location">
    <subcellularLocation>
        <location evidence="1">Cell membrane</location>
        <topology evidence="1">Peripheral membrane protein</topology>
    </subcellularLocation>
</comment>
<comment type="similarity">
    <text evidence="1">Belongs to the ABC transporter superfamily. Methionine importer (TC 3.A.1.24) family.</text>
</comment>
<reference key="1">
    <citation type="journal article" date="2004" name="Nucleic Acids Res.">
        <title>Whole genome comparisons of serotype 4b and 1/2a strains of the food-borne pathogen Listeria monocytogenes reveal new insights into the core genome components of this species.</title>
        <authorList>
            <person name="Nelson K.E."/>
            <person name="Fouts D.E."/>
            <person name="Mongodin E.F."/>
            <person name="Ravel J."/>
            <person name="DeBoy R.T."/>
            <person name="Kolonay J.F."/>
            <person name="Rasko D.A."/>
            <person name="Angiuoli S.V."/>
            <person name="Gill S.R."/>
            <person name="Paulsen I.T."/>
            <person name="Peterson J.D."/>
            <person name="White O."/>
            <person name="Nelson W.C."/>
            <person name="Nierman W.C."/>
            <person name="Beanan M.J."/>
            <person name="Brinkac L.M."/>
            <person name="Daugherty S.C."/>
            <person name="Dodson R.J."/>
            <person name="Durkin A.S."/>
            <person name="Madupu R."/>
            <person name="Haft D.H."/>
            <person name="Selengut J."/>
            <person name="Van Aken S.E."/>
            <person name="Khouri H.M."/>
            <person name="Fedorova N."/>
            <person name="Forberger H.A."/>
            <person name="Tran B."/>
            <person name="Kathariou S."/>
            <person name="Wonderling L.D."/>
            <person name="Uhlich G.A."/>
            <person name="Bayles D.O."/>
            <person name="Luchansky J.B."/>
            <person name="Fraser C.M."/>
        </authorList>
    </citation>
    <scope>NUCLEOTIDE SEQUENCE [LARGE SCALE GENOMIC DNA]</scope>
    <source>
        <strain>F2365</strain>
    </source>
</reference>
<proteinExistence type="inferred from homology"/>